<sequence length="229" mass="24293">MAKKSKNLRAALEKIDSTKAYSVEEAVALAKETNFAKFDATVEVSYNLNIDVKKADQQIRGAMVLPAGTGKTSRVLVFARGAKAEEAKAAGADFVGEDDLVAKIQGGWLDFDVVIATPDMMALVGRLGRVLGPRNLMPNPKTGTVTMDVAKAVEESKGGKITYRADKAGNVQALIGKVSFDDAKLVDNFKAFNDVIVKAKPATAKGTYITNLSITTTQGVGIKVDPNSL</sequence>
<feature type="chain" id="PRO_0000125742" description="Large ribosomal subunit protein uL1">
    <location>
        <begin position="1"/>
        <end position="229"/>
    </location>
</feature>
<evidence type="ECO:0000255" key="1">
    <source>
        <dbReference type="HAMAP-Rule" id="MF_01318"/>
    </source>
</evidence>
<evidence type="ECO:0000305" key="2"/>
<comment type="function">
    <text evidence="1">Binds directly to 23S rRNA. The L1 stalk is quite mobile in the ribosome, and is involved in E site tRNA release.</text>
</comment>
<comment type="function">
    <text evidence="1">Protein L1 is also a translational repressor protein, it controls the translation of the L11 operon by binding to its mRNA.</text>
</comment>
<comment type="subunit">
    <text evidence="1">Part of the 50S ribosomal subunit.</text>
</comment>
<comment type="similarity">
    <text evidence="1">Belongs to the universal ribosomal protein uL1 family.</text>
</comment>
<keyword id="KW-1185">Reference proteome</keyword>
<keyword id="KW-0678">Repressor</keyword>
<keyword id="KW-0687">Ribonucleoprotein</keyword>
<keyword id="KW-0689">Ribosomal protein</keyword>
<keyword id="KW-0694">RNA-binding</keyword>
<keyword id="KW-0699">rRNA-binding</keyword>
<keyword id="KW-0810">Translation regulation</keyword>
<keyword id="KW-0820">tRNA-binding</keyword>
<protein>
    <recommendedName>
        <fullName evidence="1">Large ribosomal subunit protein uL1</fullName>
    </recommendedName>
    <alternativeName>
        <fullName evidence="2">50S ribosomal protein L1</fullName>
    </alternativeName>
</protein>
<dbReference type="EMBL" id="AE009948">
    <property type="protein sequence ID" value="AAN00386.1"/>
    <property type="molecule type" value="Genomic_DNA"/>
</dbReference>
<dbReference type="RefSeq" id="NP_688513.1">
    <property type="nucleotide sequence ID" value="NC_004116.1"/>
</dbReference>
<dbReference type="RefSeq" id="WP_001085664.1">
    <property type="nucleotide sequence ID" value="NC_004116.1"/>
</dbReference>
<dbReference type="SMR" id="P66094"/>
<dbReference type="STRING" id="208435.SAG1519"/>
<dbReference type="GeneID" id="66886374"/>
<dbReference type="KEGG" id="sag:SAG1519"/>
<dbReference type="PATRIC" id="fig|208435.3.peg.1528"/>
<dbReference type="HOGENOM" id="CLU_062853_0_0_9"/>
<dbReference type="OrthoDB" id="9803740at2"/>
<dbReference type="Proteomes" id="UP000000821">
    <property type="component" value="Chromosome"/>
</dbReference>
<dbReference type="GO" id="GO:0015934">
    <property type="term" value="C:large ribosomal subunit"/>
    <property type="evidence" value="ECO:0007669"/>
    <property type="project" value="InterPro"/>
</dbReference>
<dbReference type="GO" id="GO:0019843">
    <property type="term" value="F:rRNA binding"/>
    <property type="evidence" value="ECO:0007669"/>
    <property type="project" value="UniProtKB-UniRule"/>
</dbReference>
<dbReference type="GO" id="GO:0003735">
    <property type="term" value="F:structural constituent of ribosome"/>
    <property type="evidence" value="ECO:0007669"/>
    <property type="project" value="InterPro"/>
</dbReference>
<dbReference type="GO" id="GO:0000049">
    <property type="term" value="F:tRNA binding"/>
    <property type="evidence" value="ECO:0007669"/>
    <property type="project" value="UniProtKB-KW"/>
</dbReference>
<dbReference type="GO" id="GO:0006417">
    <property type="term" value="P:regulation of translation"/>
    <property type="evidence" value="ECO:0007669"/>
    <property type="project" value="UniProtKB-KW"/>
</dbReference>
<dbReference type="GO" id="GO:0006412">
    <property type="term" value="P:translation"/>
    <property type="evidence" value="ECO:0007669"/>
    <property type="project" value="UniProtKB-UniRule"/>
</dbReference>
<dbReference type="CDD" id="cd00403">
    <property type="entry name" value="Ribosomal_L1"/>
    <property type="match status" value="1"/>
</dbReference>
<dbReference type="FunFam" id="3.40.50.790:FF:000001">
    <property type="entry name" value="50S ribosomal protein L1"/>
    <property type="match status" value="1"/>
</dbReference>
<dbReference type="Gene3D" id="3.30.190.20">
    <property type="match status" value="1"/>
</dbReference>
<dbReference type="Gene3D" id="3.40.50.790">
    <property type="match status" value="1"/>
</dbReference>
<dbReference type="HAMAP" id="MF_01318_B">
    <property type="entry name" value="Ribosomal_uL1_B"/>
    <property type="match status" value="1"/>
</dbReference>
<dbReference type="InterPro" id="IPR005878">
    <property type="entry name" value="Ribosom_uL1_bac-type"/>
</dbReference>
<dbReference type="InterPro" id="IPR002143">
    <property type="entry name" value="Ribosomal_uL1"/>
</dbReference>
<dbReference type="InterPro" id="IPR023674">
    <property type="entry name" value="Ribosomal_uL1-like"/>
</dbReference>
<dbReference type="InterPro" id="IPR028364">
    <property type="entry name" value="Ribosomal_uL1/biogenesis"/>
</dbReference>
<dbReference type="InterPro" id="IPR016095">
    <property type="entry name" value="Ribosomal_uL1_3-a/b-sand"/>
</dbReference>
<dbReference type="InterPro" id="IPR023673">
    <property type="entry name" value="Ribosomal_uL1_CS"/>
</dbReference>
<dbReference type="NCBIfam" id="TIGR01169">
    <property type="entry name" value="rplA_bact"/>
    <property type="match status" value="1"/>
</dbReference>
<dbReference type="PANTHER" id="PTHR36427">
    <property type="entry name" value="54S RIBOSOMAL PROTEIN L1, MITOCHONDRIAL"/>
    <property type="match status" value="1"/>
</dbReference>
<dbReference type="PANTHER" id="PTHR36427:SF3">
    <property type="entry name" value="LARGE RIBOSOMAL SUBUNIT PROTEIN UL1M"/>
    <property type="match status" value="1"/>
</dbReference>
<dbReference type="Pfam" id="PF00687">
    <property type="entry name" value="Ribosomal_L1"/>
    <property type="match status" value="1"/>
</dbReference>
<dbReference type="PIRSF" id="PIRSF002155">
    <property type="entry name" value="Ribosomal_L1"/>
    <property type="match status" value="1"/>
</dbReference>
<dbReference type="SUPFAM" id="SSF56808">
    <property type="entry name" value="Ribosomal protein L1"/>
    <property type="match status" value="1"/>
</dbReference>
<dbReference type="PROSITE" id="PS01199">
    <property type="entry name" value="RIBOSOMAL_L1"/>
    <property type="match status" value="1"/>
</dbReference>
<name>RL1_STRA5</name>
<gene>
    <name evidence="1" type="primary">rplA</name>
    <name type="ordered locus">SAG1519</name>
</gene>
<proteinExistence type="inferred from homology"/>
<organism>
    <name type="scientific">Streptococcus agalactiae serotype V (strain ATCC BAA-611 / 2603 V/R)</name>
    <dbReference type="NCBI Taxonomy" id="208435"/>
    <lineage>
        <taxon>Bacteria</taxon>
        <taxon>Bacillati</taxon>
        <taxon>Bacillota</taxon>
        <taxon>Bacilli</taxon>
        <taxon>Lactobacillales</taxon>
        <taxon>Streptococcaceae</taxon>
        <taxon>Streptococcus</taxon>
    </lineage>
</organism>
<reference key="1">
    <citation type="journal article" date="2002" name="Proc. Natl. Acad. Sci. U.S.A.">
        <title>Complete genome sequence and comparative genomic analysis of an emerging human pathogen, serotype V Streptococcus agalactiae.</title>
        <authorList>
            <person name="Tettelin H."/>
            <person name="Masignani V."/>
            <person name="Cieslewicz M.J."/>
            <person name="Eisen J.A."/>
            <person name="Peterson S.N."/>
            <person name="Wessels M.R."/>
            <person name="Paulsen I.T."/>
            <person name="Nelson K.E."/>
            <person name="Margarit I."/>
            <person name="Read T.D."/>
            <person name="Madoff L.C."/>
            <person name="Wolf A.M."/>
            <person name="Beanan M.J."/>
            <person name="Brinkac L.M."/>
            <person name="Daugherty S.C."/>
            <person name="DeBoy R.T."/>
            <person name="Durkin A.S."/>
            <person name="Kolonay J.F."/>
            <person name="Madupu R."/>
            <person name="Lewis M.R."/>
            <person name="Radune D."/>
            <person name="Fedorova N.B."/>
            <person name="Scanlan D."/>
            <person name="Khouri H.M."/>
            <person name="Mulligan S."/>
            <person name="Carty H.A."/>
            <person name="Cline R.T."/>
            <person name="Van Aken S.E."/>
            <person name="Gill J."/>
            <person name="Scarselli M."/>
            <person name="Mora M."/>
            <person name="Iacobini E.T."/>
            <person name="Brettoni C."/>
            <person name="Galli G."/>
            <person name="Mariani M."/>
            <person name="Vegni F."/>
            <person name="Maione D."/>
            <person name="Rinaudo D."/>
            <person name="Rappuoli R."/>
            <person name="Telford J.L."/>
            <person name="Kasper D.L."/>
            <person name="Grandi G."/>
            <person name="Fraser C.M."/>
        </authorList>
    </citation>
    <scope>NUCLEOTIDE SEQUENCE [LARGE SCALE GENOMIC DNA]</scope>
    <source>
        <strain>ATCC BAA-611 / 2603 V/R</strain>
    </source>
</reference>
<accession>P66094</accession>
<accession>Q8DYG2</accession>
<accession>Q8E425</accession>